<organism>
    <name type="scientific">Pseudomonas putida (strain W619)</name>
    <dbReference type="NCBI Taxonomy" id="390235"/>
    <lineage>
        <taxon>Bacteria</taxon>
        <taxon>Pseudomonadati</taxon>
        <taxon>Pseudomonadota</taxon>
        <taxon>Gammaproteobacteria</taxon>
        <taxon>Pseudomonadales</taxon>
        <taxon>Pseudomonadaceae</taxon>
        <taxon>Pseudomonas</taxon>
    </lineage>
</organism>
<keyword id="KW-0067">ATP-binding</keyword>
<keyword id="KW-0520">NAD</keyword>
<keyword id="KW-0547">Nucleotide-binding</keyword>
<keyword id="KW-0548">Nucleotidyltransferase</keyword>
<keyword id="KW-0662">Pyridine nucleotide biosynthesis</keyword>
<keyword id="KW-0808">Transferase</keyword>
<reference key="1">
    <citation type="submission" date="2008-02" db="EMBL/GenBank/DDBJ databases">
        <title>Complete sequence of Pseudomonas putida W619.</title>
        <authorList>
            <person name="Copeland A."/>
            <person name="Lucas S."/>
            <person name="Lapidus A."/>
            <person name="Barry K."/>
            <person name="Detter J.C."/>
            <person name="Glavina del Rio T."/>
            <person name="Dalin E."/>
            <person name="Tice H."/>
            <person name="Pitluck S."/>
            <person name="Chain P."/>
            <person name="Malfatti S."/>
            <person name="Shin M."/>
            <person name="Vergez L."/>
            <person name="Schmutz J."/>
            <person name="Larimer F."/>
            <person name="Land M."/>
            <person name="Hauser L."/>
            <person name="Kyrpides N."/>
            <person name="Kim E."/>
            <person name="Taghavi S."/>
            <person name="Vangronsveld D."/>
            <person name="van der Lelie D."/>
            <person name="Richardson P."/>
        </authorList>
    </citation>
    <scope>NUCLEOTIDE SEQUENCE [LARGE SCALE GENOMIC DNA]</scope>
    <source>
        <strain>W619</strain>
    </source>
</reference>
<name>NADD_PSEPW</name>
<feature type="chain" id="PRO_1000100789" description="Probable nicotinate-nucleotide adenylyltransferase">
    <location>
        <begin position="1"/>
        <end position="219"/>
    </location>
</feature>
<gene>
    <name evidence="1" type="primary">nadD</name>
    <name type="ordered locus">PputW619_0611</name>
</gene>
<proteinExistence type="inferred from homology"/>
<protein>
    <recommendedName>
        <fullName evidence="1">Probable nicotinate-nucleotide adenylyltransferase</fullName>
        <ecNumber evidence="1">2.7.7.18</ecNumber>
    </recommendedName>
    <alternativeName>
        <fullName evidence="1">Deamido-NAD(+) diphosphorylase</fullName>
    </alternativeName>
    <alternativeName>
        <fullName evidence="1">Deamido-NAD(+) pyrophosphorylase</fullName>
    </alternativeName>
    <alternativeName>
        <fullName evidence="1">Nicotinate mononucleotide adenylyltransferase</fullName>
        <shortName evidence="1">NaMN adenylyltransferase</shortName>
    </alternativeName>
</protein>
<evidence type="ECO:0000255" key="1">
    <source>
        <dbReference type="HAMAP-Rule" id="MF_00244"/>
    </source>
</evidence>
<accession>B1J134</accession>
<sequence length="219" mass="24355">MSKAQAVRRIGILGGTFDPVHIGHLRSALEVTEFMGLEELRLLPNARPPHRDTPQVAAEDRLAMVREAVQGVERLSVDARELERDKPSYTIDTLESVRAELGADDQLFLVLGWDAFCGLPGWHRWEELLQHCHILVLQRPDADVEPPDELRNLLAARSESDPTAMSGPAGSISFVWQTPLAVSATQIRQLLASGRSVRFLVPDAVLAYIEAHELYRAPN</sequence>
<dbReference type="EC" id="2.7.7.18" evidence="1"/>
<dbReference type="EMBL" id="CP000949">
    <property type="protein sequence ID" value="ACA71116.1"/>
    <property type="molecule type" value="Genomic_DNA"/>
</dbReference>
<dbReference type="SMR" id="B1J134"/>
<dbReference type="STRING" id="390235.PputW619_0611"/>
<dbReference type="KEGG" id="ppw:PputW619_0611"/>
<dbReference type="eggNOG" id="COG1057">
    <property type="taxonomic scope" value="Bacteria"/>
</dbReference>
<dbReference type="HOGENOM" id="CLU_069765_0_0_6"/>
<dbReference type="UniPathway" id="UPA00253">
    <property type="reaction ID" value="UER00332"/>
</dbReference>
<dbReference type="GO" id="GO:0005524">
    <property type="term" value="F:ATP binding"/>
    <property type="evidence" value="ECO:0007669"/>
    <property type="project" value="UniProtKB-KW"/>
</dbReference>
<dbReference type="GO" id="GO:0004515">
    <property type="term" value="F:nicotinate-nucleotide adenylyltransferase activity"/>
    <property type="evidence" value="ECO:0007669"/>
    <property type="project" value="UniProtKB-UniRule"/>
</dbReference>
<dbReference type="GO" id="GO:0009435">
    <property type="term" value="P:NAD biosynthetic process"/>
    <property type="evidence" value="ECO:0007669"/>
    <property type="project" value="UniProtKB-UniRule"/>
</dbReference>
<dbReference type="CDD" id="cd02165">
    <property type="entry name" value="NMNAT"/>
    <property type="match status" value="1"/>
</dbReference>
<dbReference type="Gene3D" id="3.40.50.620">
    <property type="entry name" value="HUPs"/>
    <property type="match status" value="1"/>
</dbReference>
<dbReference type="HAMAP" id="MF_00244">
    <property type="entry name" value="NaMN_adenylyltr"/>
    <property type="match status" value="1"/>
</dbReference>
<dbReference type="InterPro" id="IPR004821">
    <property type="entry name" value="Cyt_trans-like"/>
</dbReference>
<dbReference type="InterPro" id="IPR005248">
    <property type="entry name" value="NadD/NMNAT"/>
</dbReference>
<dbReference type="InterPro" id="IPR014729">
    <property type="entry name" value="Rossmann-like_a/b/a_fold"/>
</dbReference>
<dbReference type="NCBIfam" id="TIGR00125">
    <property type="entry name" value="cyt_tran_rel"/>
    <property type="match status" value="1"/>
</dbReference>
<dbReference type="NCBIfam" id="TIGR00482">
    <property type="entry name" value="nicotinate (nicotinamide) nucleotide adenylyltransferase"/>
    <property type="match status" value="1"/>
</dbReference>
<dbReference type="NCBIfam" id="NF000839">
    <property type="entry name" value="PRK00071.1-1"/>
    <property type="match status" value="1"/>
</dbReference>
<dbReference type="NCBIfam" id="NF000840">
    <property type="entry name" value="PRK00071.1-3"/>
    <property type="match status" value="1"/>
</dbReference>
<dbReference type="PANTHER" id="PTHR39321">
    <property type="entry name" value="NICOTINATE-NUCLEOTIDE ADENYLYLTRANSFERASE-RELATED"/>
    <property type="match status" value="1"/>
</dbReference>
<dbReference type="PANTHER" id="PTHR39321:SF3">
    <property type="entry name" value="PHOSPHOPANTETHEINE ADENYLYLTRANSFERASE"/>
    <property type="match status" value="1"/>
</dbReference>
<dbReference type="Pfam" id="PF01467">
    <property type="entry name" value="CTP_transf_like"/>
    <property type="match status" value="1"/>
</dbReference>
<dbReference type="SUPFAM" id="SSF52374">
    <property type="entry name" value="Nucleotidylyl transferase"/>
    <property type="match status" value="1"/>
</dbReference>
<comment type="function">
    <text evidence="1">Catalyzes the reversible adenylation of nicotinate mononucleotide (NaMN) to nicotinic acid adenine dinucleotide (NaAD).</text>
</comment>
<comment type="catalytic activity">
    <reaction evidence="1">
        <text>nicotinate beta-D-ribonucleotide + ATP + H(+) = deamido-NAD(+) + diphosphate</text>
        <dbReference type="Rhea" id="RHEA:22860"/>
        <dbReference type="ChEBI" id="CHEBI:15378"/>
        <dbReference type="ChEBI" id="CHEBI:30616"/>
        <dbReference type="ChEBI" id="CHEBI:33019"/>
        <dbReference type="ChEBI" id="CHEBI:57502"/>
        <dbReference type="ChEBI" id="CHEBI:58437"/>
        <dbReference type="EC" id="2.7.7.18"/>
    </reaction>
</comment>
<comment type="pathway">
    <text evidence="1">Cofactor biosynthesis; NAD(+) biosynthesis; deamido-NAD(+) from nicotinate D-ribonucleotide: step 1/1.</text>
</comment>
<comment type="similarity">
    <text evidence="1">Belongs to the NadD family.</text>
</comment>